<protein>
    <recommendedName>
        <fullName>Metacaspase-1</fullName>
        <ecNumber>3.4.22.-</ecNumber>
    </recommendedName>
</protein>
<accession>A6ZP43</accession>
<reference key="1">
    <citation type="journal article" date="2007" name="Proc. Natl. Acad. Sci. U.S.A.">
        <title>Genome sequencing and comparative analysis of Saccharomyces cerevisiae strain YJM789.</title>
        <authorList>
            <person name="Wei W."/>
            <person name="McCusker J.H."/>
            <person name="Hyman R.W."/>
            <person name="Jones T."/>
            <person name="Ning Y."/>
            <person name="Cao Z."/>
            <person name="Gu Z."/>
            <person name="Bruno D."/>
            <person name="Miranda M."/>
            <person name="Nguyen M."/>
            <person name="Wilhelmy J."/>
            <person name="Komp C."/>
            <person name="Tamse R."/>
            <person name="Wang X."/>
            <person name="Jia P."/>
            <person name="Luedi P."/>
            <person name="Oefner P.J."/>
            <person name="David L."/>
            <person name="Dietrich F.S."/>
            <person name="Li Y."/>
            <person name="Davis R.W."/>
            <person name="Steinmetz L.M."/>
        </authorList>
    </citation>
    <scope>NUCLEOTIDE SEQUENCE [LARGE SCALE GENOMIC DNA]</scope>
    <source>
        <strain>YJM789</strain>
    </source>
</reference>
<proteinExistence type="inferred from homology"/>
<organism>
    <name type="scientific">Saccharomyces cerevisiae (strain YJM789)</name>
    <name type="common">Baker's yeast</name>
    <dbReference type="NCBI Taxonomy" id="307796"/>
    <lineage>
        <taxon>Eukaryota</taxon>
        <taxon>Fungi</taxon>
        <taxon>Dikarya</taxon>
        <taxon>Ascomycota</taxon>
        <taxon>Saccharomycotina</taxon>
        <taxon>Saccharomycetes</taxon>
        <taxon>Saccharomycetales</taxon>
        <taxon>Saccharomycetaceae</taxon>
        <taxon>Saccharomyces</taxon>
    </lineage>
</organism>
<evidence type="ECO:0000250" key="1"/>
<evidence type="ECO:0000255" key="2"/>
<evidence type="ECO:0000256" key="3">
    <source>
        <dbReference type="SAM" id="MobiDB-lite"/>
    </source>
</evidence>
<evidence type="ECO:0000305" key="4"/>
<sequence>MYPGSGRYTYNNAGGNNGYQRPMAPPPNQQYGQQYGQQYEQQYGQQYGQQNDQQFSQQYAPPPGPPPMAYNRPVYPPPQFQQEQAKAQLSNGYNNPNVNASNMYGPPQNMSLPPPQTQTIQGTDQPYQYSQCTGRRKALIIGINYIGSKNQLRGCINDAHNIFNFLTNGYGYSSDDIVILTDDQNDLVRVPTRANMIRAMQWLVKDAQPNDSLFLHYSGHGGQTEDLDGDEEDGMDDVIYPVDFETQGPIIDDEMHDIMVKPLQQGVRLTALFDSCHSGTVLDLPYTYSTKGIIKEPNIWKDVGQDGLQAAISYATGNRAALIGSLGSIFKTVKGGMGNNVDRERVRQIKFSAADVVMLSGSKDNQTSADAVEDGQNTGAMSHAFIKVMTLQPQQSYLSLLQNMRKELAGKYSQKPQLSSSHPIDVNLQFIM</sequence>
<keyword id="KW-0053">Apoptosis</keyword>
<keyword id="KW-0963">Cytoplasm</keyword>
<keyword id="KW-0378">Hydrolase</keyword>
<keyword id="KW-0539">Nucleus</keyword>
<keyword id="KW-0645">Protease</keyword>
<keyword id="KW-0788">Thiol protease</keyword>
<keyword id="KW-0865">Zymogen</keyword>
<dbReference type="EC" id="3.4.22.-"/>
<dbReference type="EMBL" id="AAFW02000032">
    <property type="protein sequence ID" value="EDN63533.1"/>
    <property type="status" value="ALT_INIT"/>
    <property type="molecule type" value="Genomic_DNA"/>
</dbReference>
<dbReference type="SMR" id="A6ZP43"/>
<dbReference type="MEROPS" id="C14.035"/>
<dbReference type="TopDownProteomics" id="A6ZP43"/>
<dbReference type="HOGENOM" id="CLU_029389_0_1_1"/>
<dbReference type="OrthoDB" id="38091at4893"/>
<dbReference type="Proteomes" id="UP000007060">
    <property type="component" value="Unassembled WGS sequence"/>
</dbReference>
<dbReference type="GO" id="GO:0005737">
    <property type="term" value="C:cytoplasm"/>
    <property type="evidence" value="ECO:0007669"/>
    <property type="project" value="UniProtKB-SubCell"/>
</dbReference>
<dbReference type="GO" id="GO:0005634">
    <property type="term" value="C:nucleus"/>
    <property type="evidence" value="ECO:0007669"/>
    <property type="project" value="UniProtKB-SubCell"/>
</dbReference>
<dbReference type="GO" id="GO:0004197">
    <property type="term" value="F:cysteine-type endopeptidase activity"/>
    <property type="evidence" value="ECO:0007669"/>
    <property type="project" value="InterPro"/>
</dbReference>
<dbReference type="GO" id="GO:0006915">
    <property type="term" value="P:apoptotic process"/>
    <property type="evidence" value="ECO:0007669"/>
    <property type="project" value="UniProtKB-KW"/>
</dbReference>
<dbReference type="GO" id="GO:0006508">
    <property type="term" value="P:proteolysis"/>
    <property type="evidence" value="ECO:0007669"/>
    <property type="project" value="UniProtKB-KW"/>
</dbReference>
<dbReference type="FunFam" id="3.40.50.12660:FF:000005">
    <property type="entry name" value="Mca1p"/>
    <property type="match status" value="1"/>
</dbReference>
<dbReference type="FunFam" id="3.40.50.12660:FF:000006">
    <property type="entry name" value="Mca1p"/>
    <property type="match status" value="1"/>
</dbReference>
<dbReference type="Gene3D" id="3.40.50.12660">
    <property type="match status" value="2"/>
</dbReference>
<dbReference type="InterPro" id="IPR029030">
    <property type="entry name" value="Caspase-like_dom_sf"/>
</dbReference>
<dbReference type="InterPro" id="IPR050452">
    <property type="entry name" value="Metacaspase"/>
</dbReference>
<dbReference type="InterPro" id="IPR011600">
    <property type="entry name" value="Pept_C14_caspase"/>
</dbReference>
<dbReference type="PANTHER" id="PTHR48104:SF30">
    <property type="entry name" value="METACASPASE-1"/>
    <property type="match status" value="1"/>
</dbReference>
<dbReference type="PANTHER" id="PTHR48104">
    <property type="entry name" value="METACASPASE-4"/>
    <property type="match status" value="1"/>
</dbReference>
<dbReference type="Pfam" id="PF00656">
    <property type="entry name" value="Peptidase_C14"/>
    <property type="match status" value="1"/>
</dbReference>
<dbReference type="SUPFAM" id="SSF52129">
    <property type="entry name" value="Caspase-like"/>
    <property type="match status" value="1"/>
</dbReference>
<comment type="function">
    <text evidence="1">Mediates cell death (apoptosis) triggered by oxygen stress, salt stress or chronological aging. Regulated cell death can prevent a release of toxic cellular components, thus avoiding necrotic collapse of the colony, and can also provide nutrients for healthy cells. Therefore, regulated cell death in yeast colonies can be as important for their development as are apoptosis and related processes that occur within metazoa (By similarity).</text>
</comment>
<comment type="subcellular location">
    <subcellularLocation>
        <location evidence="1">Cytoplasm</location>
    </subcellularLocation>
    <subcellularLocation>
        <location evidence="1">Nucleus</location>
    </subcellularLocation>
</comment>
<comment type="similarity">
    <text evidence="4">Belongs to the peptidase C14B family.</text>
</comment>
<comment type="sequence caution" evidence="4">
    <conflict type="erroneous initiation">
        <sequence resource="EMBL-CDS" id="EDN63533"/>
    </conflict>
</comment>
<name>MCA1_YEAS7</name>
<gene>
    <name type="primary">MCA1</name>
    <name type="ORF">SCY_5258</name>
</gene>
<feature type="propeptide" id="PRO_0000333675" evidence="2">
    <location>
        <begin position="1"/>
        <end status="unknown"/>
    </location>
</feature>
<feature type="chain" id="PRO_0000333676" description="Metacaspase-1">
    <location>
        <begin status="unknown"/>
        <end position="432"/>
    </location>
</feature>
<feature type="region of interest" description="Disordered" evidence="3">
    <location>
        <begin position="1"/>
        <end position="70"/>
    </location>
</feature>
<feature type="compositionally biased region" description="Low complexity" evidence="3">
    <location>
        <begin position="1"/>
        <end position="14"/>
    </location>
</feature>
<feature type="compositionally biased region" description="Low complexity" evidence="3">
    <location>
        <begin position="29"/>
        <end position="59"/>
    </location>
</feature>
<feature type="compositionally biased region" description="Pro residues" evidence="3">
    <location>
        <begin position="60"/>
        <end position="70"/>
    </location>
</feature>
<feature type="active site" evidence="1">
    <location>
        <position position="220"/>
    </location>
</feature>
<feature type="active site" evidence="1">
    <location>
        <position position="276"/>
    </location>
</feature>